<sequence length="293" mass="32215">MLKKIIGIGVSAMLALSLAACGSENDENASAAEQVNKTIIGIDPGSGIMSLTDKAMKDYDLNDWTLISASSAAMTATLKKSYDRKKPIIITGWTPHWMFSRYKLKYLDDPKQSYGSAEEIHTITRKGFSKEQPNAAKLLSQFKWTQDEMGEIMIKVEEGEKPAKVAAEYVNKHKDQIAEWTKGVQKVKGDKINLAYVAWDSEIASTNVIGKVLEDLGYEVTLTQVEAGPMWTAIATGSADASLSAWLPNTHKAYAAKYKGKYDDIGTSMTGVKMGLVVPQYMKNVNSIEDLKK</sequence>
<comment type="function">
    <text evidence="3 4">Involved in a multicomponent binding-protein-dependent transport system for glycine betaine.</text>
</comment>
<comment type="subunit">
    <text evidence="2 3">The complex is composed of two ATP-binding proteins (OpuAA), two transmembrane proteins (OpuAB) and a solute-binding protein (OpuAC) (PubMed:7622480). Interacts with FloT (PubMed:23651456).</text>
</comment>
<comment type="subcellular location">
    <subcellularLocation>
        <location evidence="1 2 3">Cell membrane</location>
        <topology evidence="1 3">Lipid-anchor</topology>
    </subcellularLocation>
    <subcellularLocation>
        <location evidence="2">Membrane raft</location>
        <topology>Lipid-anchor</topology>
    </subcellularLocation>
    <text evidence="2">Present in detergent-resistant membrane (DRM) fractions that may be equivalent to eukaryotic membrane rafts; these rafts include proteins involved in signaling, molecule trafficking and protein secretion.</text>
</comment>
<accession>P46922</accession>
<organism>
    <name type="scientific">Bacillus subtilis (strain 168)</name>
    <dbReference type="NCBI Taxonomy" id="224308"/>
    <lineage>
        <taxon>Bacteria</taxon>
        <taxon>Bacillati</taxon>
        <taxon>Bacillota</taxon>
        <taxon>Bacilli</taxon>
        <taxon>Bacillales</taxon>
        <taxon>Bacillaceae</taxon>
        <taxon>Bacillus</taxon>
    </lineage>
</organism>
<feature type="signal peptide" evidence="5">
    <location>
        <begin position="1"/>
        <end position="20"/>
    </location>
</feature>
<feature type="chain" id="PRO_0000031844" description="Glycine betaine-binding protein OpuAC">
    <location>
        <begin position="21"/>
        <end position="293"/>
    </location>
</feature>
<feature type="lipid moiety-binding region" description="N-palmitoyl cysteine" evidence="5">
    <location>
        <position position="21"/>
    </location>
</feature>
<feature type="lipid moiety-binding region" description="S-diacylglycerol cysteine" evidence="5">
    <location>
        <position position="21"/>
    </location>
</feature>
<feature type="helix" evidence="6">
    <location>
        <begin position="31"/>
        <end position="34"/>
    </location>
</feature>
<feature type="turn" evidence="6">
    <location>
        <begin position="35"/>
        <end position="37"/>
    </location>
</feature>
<feature type="strand" evidence="6">
    <location>
        <begin position="38"/>
        <end position="40"/>
    </location>
</feature>
<feature type="helix" evidence="6">
    <location>
        <begin position="47"/>
        <end position="58"/>
    </location>
</feature>
<feature type="strand" evidence="6">
    <location>
        <begin position="65"/>
        <end position="67"/>
    </location>
</feature>
<feature type="helix" evidence="6">
    <location>
        <begin position="71"/>
        <end position="83"/>
    </location>
</feature>
<feature type="strand" evidence="6">
    <location>
        <begin position="90"/>
        <end position="95"/>
    </location>
</feature>
<feature type="helix" evidence="6">
    <location>
        <begin position="98"/>
        <end position="101"/>
    </location>
</feature>
<feature type="strand" evidence="6">
    <location>
        <begin position="104"/>
        <end position="106"/>
    </location>
</feature>
<feature type="strand" evidence="6">
    <location>
        <begin position="116"/>
        <end position="125"/>
    </location>
</feature>
<feature type="helix" evidence="6">
    <location>
        <begin position="128"/>
        <end position="131"/>
    </location>
</feature>
<feature type="helix" evidence="6">
    <location>
        <begin position="133"/>
        <end position="140"/>
    </location>
</feature>
<feature type="helix" evidence="6">
    <location>
        <begin position="146"/>
        <end position="157"/>
    </location>
</feature>
<feature type="helix" evidence="6">
    <location>
        <begin position="162"/>
        <end position="172"/>
    </location>
</feature>
<feature type="helix" evidence="6">
    <location>
        <begin position="174"/>
        <end position="180"/>
    </location>
</feature>
<feature type="turn" evidence="6">
    <location>
        <begin position="181"/>
        <end position="183"/>
    </location>
</feature>
<feature type="strand" evidence="6">
    <location>
        <begin position="191"/>
        <end position="196"/>
    </location>
</feature>
<feature type="helix" evidence="6">
    <location>
        <begin position="200"/>
        <end position="216"/>
    </location>
</feature>
<feature type="strand" evidence="6">
    <location>
        <begin position="219"/>
        <end position="224"/>
    </location>
</feature>
<feature type="helix" evidence="6">
    <location>
        <begin position="229"/>
        <end position="235"/>
    </location>
</feature>
<feature type="strand" evidence="6">
    <location>
        <begin position="238"/>
        <end position="247"/>
    </location>
</feature>
<feature type="turn" evidence="6">
    <location>
        <begin position="248"/>
        <end position="251"/>
    </location>
</feature>
<feature type="helix" evidence="6">
    <location>
        <begin position="252"/>
        <end position="257"/>
    </location>
</feature>
<feature type="turn" evidence="6">
    <location>
        <begin position="258"/>
        <end position="260"/>
    </location>
</feature>
<feature type="strand" evidence="6">
    <location>
        <begin position="261"/>
        <end position="279"/>
    </location>
</feature>
<feature type="helix" evidence="6">
    <location>
        <begin position="288"/>
        <end position="291"/>
    </location>
</feature>
<protein>
    <recommendedName>
        <fullName>Glycine betaine-binding protein OpuAC</fullName>
    </recommendedName>
</protein>
<evidence type="ECO:0000255" key="1">
    <source>
        <dbReference type="PROSITE-ProRule" id="PRU00303"/>
    </source>
</evidence>
<evidence type="ECO:0000269" key="2">
    <source>
    </source>
</evidence>
<evidence type="ECO:0000269" key="3">
    <source>
    </source>
</evidence>
<evidence type="ECO:0000269" key="4">
    <source>
    </source>
</evidence>
<evidence type="ECO:0000305" key="5"/>
<evidence type="ECO:0007829" key="6">
    <source>
        <dbReference type="PDB" id="2B4L"/>
    </source>
</evidence>
<dbReference type="EMBL" id="U17292">
    <property type="protein sequence ID" value="AAC43457.1"/>
    <property type="molecule type" value="Genomic_DNA"/>
</dbReference>
<dbReference type="EMBL" id="D50453">
    <property type="protein sequence ID" value="BAA08934.1"/>
    <property type="molecule type" value="Genomic_DNA"/>
</dbReference>
<dbReference type="EMBL" id="AL009126">
    <property type="protein sequence ID" value="CAB12094.1"/>
    <property type="molecule type" value="Genomic_DNA"/>
</dbReference>
<dbReference type="EMBL" id="U47860">
    <property type="protein sequence ID" value="AAC44169.1"/>
    <property type="molecule type" value="Genomic_DNA"/>
</dbReference>
<dbReference type="PIR" id="I40537">
    <property type="entry name" value="I40537"/>
</dbReference>
<dbReference type="RefSeq" id="NP_388182.1">
    <property type="nucleotide sequence ID" value="NC_000964.3"/>
</dbReference>
<dbReference type="RefSeq" id="WP_003246462.1">
    <property type="nucleotide sequence ID" value="NZ_OZ025638.1"/>
</dbReference>
<dbReference type="PDB" id="2B4L">
    <property type="method" value="X-ray"/>
    <property type="resolution" value="2.00 A"/>
    <property type="chains" value="A=26-293"/>
</dbReference>
<dbReference type="PDB" id="2B4M">
    <property type="method" value="X-ray"/>
    <property type="resolution" value="2.80 A"/>
    <property type="chains" value="A/B=26-293"/>
</dbReference>
<dbReference type="PDB" id="3CHG">
    <property type="method" value="X-ray"/>
    <property type="resolution" value="2.80 A"/>
    <property type="chains" value="A/B/C/D=26-293"/>
</dbReference>
<dbReference type="PDB" id="5NXX">
    <property type="method" value="X-ray"/>
    <property type="resolution" value="2.20 A"/>
    <property type="chains" value="C/D=26-293"/>
</dbReference>
<dbReference type="PDBsum" id="2B4L"/>
<dbReference type="PDBsum" id="2B4M"/>
<dbReference type="PDBsum" id="3CHG"/>
<dbReference type="PDBsum" id="5NXX"/>
<dbReference type="SMR" id="P46922"/>
<dbReference type="FunCoup" id="P46922">
    <property type="interactions" value="146"/>
</dbReference>
<dbReference type="STRING" id="224308.BSU03000"/>
<dbReference type="TCDB" id="3.A.1.12.2">
    <property type="family name" value="the atp-binding cassette (abc) superfamily"/>
</dbReference>
<dbReference type="jPOST" id="P46922"/>
<dbReference type="PaxDb" id="224308-BSU03000"/>
<dbReference type="EnsemblBacteria" id="CAB12094">
    <property type="protein sequence ID" value="CAB12094"/>
    <property type="gene ID" value="BSU_03000"/>
</dbReference>
<dbReference type="GeneID" id="938354"/>
<dbReference type="KEGG" id="bsu:BSU03000"/>
<dbReference type="PATRIC" id="fig|224308.179.peg.312"/>
<dbReference type="eggNOG" id="COG2113">
    <property type="taxonomic scope" value="Bacteria"/>
</dbReference>
<dbReference type="InParanoid" id="P46922"/>
<dbReference type="OrthoDB" id="9787902at2"/>
<dbReference type="PhylomeDB" id="P46922"/>
<dbReference type="BioCyc" id="BSUB:BSU03000-MONOMER"/>
<dbReference type="BRENDA" id="7.6.2.9">
    <property type="organism ID" value="658"/>
</dbReference>
<dbReference type="EvolutionaryTrace" id="P46922"/>
<dbReference type="Proteomes" id="UP000001570">
    <property type="component" value="Chromosome"/>
</dbReference>
<dbReference type="GO" id="GO:0043190">
    <property type="term" value="C:ATP-binding cassette (ABC) transporter complex"/>
    <property type="evidence" value="ECO:0007669"/>
    <property type="project" value="InterPro"/>
</dbReference>
<dbReference type="GO" id="GO:0045121">
    <property type="term" value="C:membrane raft"/>
    <property type="evidence" value="ECO:0007669"/>
    <property type="project" value="UniProtKB-SubCell"/>
</dbReference>
<dbReference type="GO" id="GO:0022857">
    <property type="term" value="F:transmembrane transporter activity"/>
    <property type="evidence" value="ECO:0007669"/>
    <property type="project" value="InterPro"/>
</dbReference>
<dbReference type="GO" id="GO:0006865">
    <property type="term" value="P:amino acid transport"/>
    <property type="evidence" value="ECO:0007669"/>
    <property type="project" value="UniProtKB-KW"/>
</dbReference>
<dbReference type="FunFam" id="3.40.190.100:FF:000003">
    <property type="entry name" value="Glycine betaine-binding protein OpuAC"/>
    <property type="match status" value="1"/>
</dbReference>
<dbReference type="Gene3D" id="3.10.105.10">
    <property type="entry name" value="Dipeptide-binding Protein, Domain 3"/>
    <property type="match status" value="1"/>
</dbReference>
<dbReference type="Gene3D" id="3.40.190.100">
    <property type="entry name" value="Glycine betaine-binding periplasmic protein, domain 2"/>
    <property type="match status" value="1"/>
</dbReference>
<dbReference type="InterPro" id="IPR007210">
    <property type="entry name" value="ABC_Gly_betaine_transp_sub-bd"/>
</dbReference>
<dbReference type="PANTHER" id="PTHR47737">
    <property type="entry name" value="GLYCINE BETAINE/PROLINE BETAINE TRANSPORT SYSTEM PERMEASE PROTEIN PROW"/>
    <property type="match status" value="1"/>
</dbReference>
<dbReference type="PANTHER" id="PTHR47737:SF1">
    <property type="entry name" value="GLYCINE BETAINE_PROLINE BETAINE TRANSPORT SYSTEM PERMEASE PROTEIN PROW"/>
    <property type="match status" value="1"/>
</dbReference>
<dbReference type="Pfam" id="PF04069">
    <property type="entry name" value="OpuAC"/>
    <property type="match status" value="2"/>
</dbReference>
<dbReference type="SUPFAM" id="SSF53850">
    <property type="entry name" value="Periplasmic binding protein-like II"/>
    <property type="match status" value="2"/>
</dbReference>
<dbReference type="PROSITE" id="PS51257">
    <property type="entry name" value="PROKAR_LIPOPROTEIN"/>
    <property type="match status" value="1"/>
</dbReference>
<gene>
    <name type="primary">opuAC</name>
    <name type="ordered locus">BSU03000</name>
</gene>
<reference key="1">
    <citation type="journal article" date="1995" name="J. Biol. Chem.">
        <title>OpuA, an osmotically regulated binding protein-dependent transport system for the osmoprotectant glycine betaine in Bacillus subtilis.</title>
        <authorList>
            <person name="Kempf B."/>
            <person name="Bremer E."/>
        </authorList>
    </citation>
    <scope>NUCLEOTIDE SEQUENCE [GENOMIC DNA]</scope>
    <scope>FUNCTION</scope>
    <scope>SUBUNIT</scope>
    <scope>SUBCELLULAR LOCATION</scope>
    <source>
        <strain>168 / JH642</strain>
    </source>
</reference>
<reference key="2">
    <citation type="journal article" date="1996" name="Microbiology">
        <title>The 25 degrees-36 degrees region of the Bacillus subtilis chromosome: determination of the sequence of a 146 kb segment and identification of 113 genes.</title>
        <authorList>
            <person name="Yamane K."/>
            <person name="Kumano M."/>
            <person name="Kurita K."/>
        </authorList>
    </citation>
    <scope>NUCLEOTIDE SEQUENCE [GENOMIC DNA]</scope>
    <source>
        <strain>168</strain>
    </source>
</reference>
<reference key="3">
    <citation type="journal article" date="1997" name="Nature">
        <title>The complete genome sequence of the Gram-positive bacterium Bacillus subtilis.</title>
        <authorList>
            <person name="Kunst F."/>
            <person name="Ogasawara N."/>
            <person name="Moszer I."/>
            <person name="Albertini A.M."/>
            <person name="Alloni G."/>
            <person name="Azevedo V."/>
            <person name="Bertero M.G."/>
            <person name="Bessieres P."/>
            <person name="Bolotin A."/>
            <person name="Borchert S."/>
            <person name="Borriss R."/>
            <person name="Boursier L."/>
            <person name="Brans A."/>
            <person name="Braun M."/>
            <person name="Brignell S.C."/>
            <person name="Bron S."/>
            <person name="Brouillet S."/>
            <person name="Bruschi C.V."/>
            <person name="Caldwell B."/>
            <person name="Capuano V."/>
            <person name="Carter N.M."/>
            <person name="Choi S.-K."/>
            <person name="Codani J.-J."/>
            <person name="Connerton I.F."/>
            <person name="Cummings N.J."/>
            <person name="Daniel R.A."/>
            <person name="Denizot F."/>
            <person name="Devine K.M."/>
            <person name="Duesterhoeft A."/>
            <person name="Ehrlich S.D."/>
            <person name="Emmerson P.T."/>
            <person name="Entian K.-D."/>
            <person name="Errington J."/>
            <person name="Fabret C."/>
            <person name="Ferrari E."/>
            <person name="Foulger D."/>
            <person name="Fritz C."/>
            <person name="Fujita M."/>
            <person name="Fujita Y."/>
            <person name="Fuma S."/>
            <person name="Galizzi A."/>
            <person name="Galleron N."/>
            <person name="Ghim S.-Y."/>
            <person name="Glaser P."/>
            <person name="Goffeau A."/>
            <person name="Golightly E.J."/>
            <person name="Grandi G."/>
            <person name="Guiseppi G."/>
            <person name="Guy B.J."/>
            <person name="Haga K."/>
            <person name="Haiech J."/>
            <person name="Harwood C.R."/>
            <person name="Henaut A."/>
            <person name="Hilbert H."/>
            <person name="Holsappel S."/>
            <person name="Hosono S."/>
            <person name="Hullo M.-F."/>
            <person name="Itaya M."/>
            <person name="Jones L.-M."/>
            <person name="Joris B."/>
            <person name="Karamata D."/>
            <person name="Kasahara Y."/>
            <person name="Klaerr-Blanchard M."/>
            <person name="Klein C."/>
            <person name="Kobayashi Y."/>
            <person name="Koetter P."/>
            <person name="Koningstein G."/>
            <person name="Krogh S."/>
            <person name="Kumano M."/>
            <person name="Kurita K."/>
            <person name="Lapidus A."/>
            <person name="Lardinois S."/>
            <person name="Lauber J."/>
            <person name="Lazarevic V."/>
            <person name="Lee S.-M."/>
            <person name="Levine A."/>
            <person name="Liu H."/>
            <person name="Masuda S."/>
            <person name="Mauel C."/>
            <person name="Medigue C."/>
            <person name="Medina N."/>
            <person name="Mellado R.P."/>
            <person name="Mizuno M."/>
            <person name="Moestl D."/>
            <person name="Nakai S."/>
            <person name="Noback M."/>
            <person name="Noone D."/>
            <person name="O'Reilly M."/>
            <person name="Ogawa K."/>
            <person name="Ogiwara A."/>
            <person name="Oudega B."/>
            <person name="Park S.-H."/>
            <person name="Parro V."/>
            <person name="Pohl T.M."/>
            <person name="Portetelle D."/>
            <person name="Porwollik S."/>
            <person name="Prescott A.M."/>
            <person name="Presecan E."/>
            <person name="Pujic P."/>
            <person name="Purnelle B."/>
            <person name="Rapoport G."/>
            <person name="Rey M."/>
            <person name="Reynolds S."/>
            <person name="Rieger M."/>
            <person name="Rivolta C."/>
            <person name="Rocha E."/>
            <person name="Roche B."/>
            <person name="Rose M."/>
            <person name="Sadaie Y."/>
            <person name="Sato T."/>
            <person name="Scanlan E."/>
            <person name="Schleich S."/>
            <person name="Schroeter R."/>
            <person name="Scoffone F."/>
            <person name="Sekiguchi J."/>
            <person name="Sekowska A."/>
            <person name="Seror S.J."/>
            <person name="Serror P."/>
            <person name="Shin B.-S."/>
            <person name="Soldo B."/>
            <person name="Sorokin A."/>
            <person name="Tacconi E."/>
            <person name="Takagi T."/>
            <person name="Takahashi H."/>
            <person name="Takemaru K."/>
            <person name="Takeuchi M."/>
            <person name="Tamakoshi A."/>
            <person name="Tanaka T."/>
            <person name="Terpstra P."/>
            <person name="Tognoni A."/>
            <person name="Tosato V."/>
            <person name="Uchiyama S."/>
            <person name="Vandenbol M."/>
            <person name="Vannier F."/>
            <person name="Vassarotti A."/>
            <person name="Viari A."/>
            <person name="Wambutt R."/>
            <person name="Wedler E."/>
            <person name="Wedler H."/>
            <person name="Weitzenegger T."/>
            <person name="Winters P."/>
            <person name="Wipat A."/>
            <person name="Yamamoto H."/>
            <person name="Yamane K."/>
            <person name="Yasumoto K."/>
            <person name="Yata K."/>
            <person name="Yoshida K."/>
            <person name="Yoshikawa H.-F."/>
            <person name="Zumstein E."/>
            <person name="Yoshikawa H."/>
            <person name="Danchin A."/>
        </authorList>
    </citation>
    <scope>NUCLEOTIDE SEQUENCE [LARGE SCALE GENOMIC DNA]</scope>
    <source>
        <strain>168</strain>
    </source>
</reference>
<reference key="4">
    <citation type="submission" date="1996-05" db="EMBL/GenBank/DDBJ databases">
        <authorList>
            <person name="Kempf B."/>
            <person name="Bremer E."/>
        </authorList>
    </citation>
    <scope>NUCLEOTIDE SEQUENCE [GENOMIC DNA] OF 274-293</scope>
    <source>
        <strain>168 / JH642</strain>
    </source>
</reference>
<reference key="5">
    <citation type="journal article" date="1996" name="J. Bacteriol.">
        <title>Three transport systems for the osmoprotectant glycine betaine operate in Bacillus subtilis: characterization of OpuD.</title>
        <authorList>
            <person name="Kappes R."/>
            <person name="Kempf B."/>
            <person name="Bremer E."/>
        </authorList>
    </citation>
    <scope>FUNCTION IN GLYCINE BETAINE TRANSPORT</scope>
    <source>
        <strain>168 / JH642</strain>
    </source>
</reference>
<reference key="6">
    <citation type="journal article" date="2013" name="Mol. Microbiol.">
        <title>Flotillins functionally organize the bacterial membrane.</title>
        <authorList>
            <person name="Bach J.N."/>
            <person name="Bramkamp M."/>
        </authorList>
    </citation>
    <scope>INTERACTION WITH FLOT</scope>
    <scope>SUBCELLULAR LOCATION</scope>
    <source>
        <strain>168</strain>
    </source>
</reference>
<keyword id="KW-0002">3D-structure</keyword>
<keyword id="KW-0029">Amino-acid transport</keyword>
<keyword id="KW-1003">Cell membrane</keyword>
<keyword id="KW-0449">Lipoprotein</keyword>
<keyword id="KW-0472">Membrane</keyword>
<keyword id="KW-0564">Palmitate</keyword>
<keyword id="KW-1185">Reference proteome</keyword>
<keyword id="KW-0732">Signal</keyword>
<keyword id="KW-0813">Transport</keyword>
<name>OPUAC_BACSU</name>
<proteinExistence type="evidence at protein level"/>